<keyword id="KW-0106">Calcium</keyword>
<keyword id="KW-0903">Direct protein sequencing</keyword>
<keyword id="KW-1015">Disulfide bond</keyword>
<keyword id="KW-0378">Hydrolase</keyword>
<keyword id="KW-0442">Lipid degradation</keyword>
<keyword id="KW-0443">Lipid metabolism</keyword>
<keyword id="KW-0479">Metal-binding</keyword>
<keyword id="KW-0528">Neurotoxin</keyword>
<keyword id="KW-0638">Presynaptic neurotoxin</keyword>
<keyword id="KW-0964">Secreted</keyword>
<keyword id="KW-0732">Signal</keyword>
<keyword id="KW-0800">Toxin</keyword>
<name>PA2B1_CROSS</name>
<reference key="1">
    <citation type="journal article" date="1994" name="Gene">
        <title>Genomic sequences encoding the acidic and basic subunits of Mojave toxin: unusually high sequence identity of non-coding regions.</title>
        <authorList>
            <person name="John T.R."/>
            <person name="Smith L.A."/>
            <person name="Kaiser I.I."/>
        </authorList>
    </citation>
    <scope>NUCLEOTIDE SEQUENCE [GENOMIC DNA]</scope>
    <source>
        <tissue>Liver</tissue>
    </source>
</reference>
<reference key="2">
    <citation type="journal article" date="1990" name="Toxicon">
        <title>Amino acid sequence of the basic subunit of Mojave toxin from the venom of the Mojave rattlesnake (Crotalus s. scutulatus).</title>
        <authorList>
            <person name="Aird S.D."/>
            <person name="Kruggel W.G."/>
            <person name="Kaiser I.I."/>
        </authorList>
    </citation>
    <scope>PROTEIN SEQUENCE OF 17-138</scope>
    <source>
        <tissue>Venom</tissue>
    </source>
</reference>
<reference key="3">
    <citation type="journal article" date="2004" name="Biochem. J.">
        <title>Molecular evolution and structure-function relationships of crotoxin-like and asparagine-6-containing phospholipases A2 in pit viper venoms.</title>
        <authorList>
            <person name="Chen Y.-H."/>
            <person name="Wang Y.-M."/>
            <person name="Hseu M.-J."/>
            <person name="Tsai I.-H."/>
        </authorList>
    </citation>
    <scope>PROTEIN SEQUENCE OF 17-39</scope>
    <scope>FUNCTION</scope>
    <scope>SUBUNIT</scope>
    <scope>MASS SPECTROMETRY</scope>
    <source>
        <tissue>Venom</tissue>
    </source>
</reference>
<proteinExistence type="evidence at protein level"/>
<protein>
    <recommendedName>
        <fullName>Basic phospholipase A2 Mtx-b</fullName>
        <shortName>svPLA2</shortName>
        <ecNumber>3.1.1.4</ecNumber>
    </recommendedName>
    <alternativeName>
        <fullName>Mojave toxin basic chain</fullName>
    </alternativeName>
    <alternativeName>
        <fullName>Phosphatidylcholine 2-acylhydrolase</fullName>
    </alternativeName>
    <alternativeName>
        <fullName>Phospholipase A2 CB1</fullName>
    </alternativeName>
</protein>
<dbReference type="EC" id="3.1.1.4"/>
<dbReference type="EMBL" id="U01027">
    <property type="protein sequence ID" value="AAC59674.1"/>
    <property type="molecule type" value="Genomic_DNA"/>
</dbReference>
<dbReference type="PIR" id="I51381">
    <property type="entry name" value="I51381"/>
</dbReference>
<dbReference type="SMR" id="P62023"/>
<dbReference type="ABCD" id="P62023">
    <property type="antibodies" value="1 sequenced antibody"/>
</dbReference>
<dbReference type="GO" id="GO:0005576">
    <property type="term" value="C:extracellular region"/>
    <property type="evidence" value="ECO:0007669"/>
    <property type="project" value="UniProtKB-SubCell"/>
</dbReference>
<dbReference type="GO" id="GO:0005509">
    <property type="term" value="F:calcium ion binding"/>
    <property type="evidence" value="ECO:0007669"/>
    <property type="project" value="InterPro"/>
</dbReference>
<dbReference type="GO" id="GO:0047498">
    <property type="term" value="F:calcium-dependent phospholipase A2 activity"/>
    <property type="evidence" value="ECO:0007669"/>
    <property type="project" value="TreeGrafter"/>
</dbReference>
<dbReference type="GO" id="GO:0005543">
    <property type="term" value="F:phospholipid binding"/>
    <property type="evidence" value="ECO:0007669"/>
    <property type="project" value="TreeGrafter"/>
</dbReference>
<dbReference type="GO" id="GO:0090729">
    <property type="term" value="F:toxin activity"/>
    <property type="evidence" value="ECO:0007669"/>
    <property type="project" value="UniProtKB-KW"/>
</dbReference>
<dbReference type="GO" id="GO:0050482">
    <property type="term" value="P:arachidonate secretion"/>
    <property type="evidence" value="ECO:0007669"/>
    <property type="project" value="InterPro"/>
</dbReference>
<dbReference type="GO" id="GO:0016042">
    <property type="term" value="P:lipid catabolic process"/>
    <property type="evidence" value="ECO:0007669"/>
    <property type="project" value="UniProtKB-KW"/>
</dbReference>
<dbReference type="GO" id="GO:0042130">
    <property type="term" value="P:negative regulation of T cell proliferation"/>
    <property type="evidence" value="ECO:0007669"/>
    <property type="project" value="TreeGrafter"/>
</dbReference>
<dbReference type="GO" id="GO:0006644">
    <property type="term" value="P:phospholipid metabolic process"/>
    <property type="evidence" value="ECO:0007669"/>
    <property type="project" value="InterPro"/>
</dbReference>
<dbReference type="CDD" id="cd00125">
    <property type="entry name" value="PLA2c"/>
    <property type="match status" value="1"/>
</dbReference>
<dbReference type="FunFam" id="1.20.90.10:FF:000001">
    <property type="entry name" value="Basic phospholipase A2 homolog"/>
    <property type="match status" value="1"/>
</dbReference>
<dbReference type="Gene3D" id="1.20.90.10">
    <property type="entry name" value="Phospholipase A2 domain"/>
    <property type="match status" value="1"/>
</dbReference>
<dbReference type="InterPro" id="IPR001211">
    <property type="entry name" value="PLipase_A2"/>
</dbReference>
<dbReference type="InterPro" id="IPR033112">
    <property type="entry name" value="PLipase_A2_Asp_AS"/>
</dbReference>
<dbReference type="InterPro" id="IPR016090">
    <property type="entry name" value="PLipase_A2_dom"/>
</dbReference>
<dbReference type="InterPro" id="IPR036444">
    <property type="entry name" value="PLipase_A2_dom_sf"/>
</dbReference>
<dbReference type="InterPro" id="IPR033113">
    <property type="entry name" value="PLipase_A2_His_AS"/>
</dbReference>
<dbReference type="PANTHER" id="PTHR11716">
    <property type="entry name" value="PHOSPHOLIPASE A2 FAMILY MEMBER"/>
    <property type="match status" value="1"/>
</dbReference>
<dbReference type="PANTHER" id="PTHR11716:SF9">
    <property type="entry name" value="PHOSPHOLIPASE A2, MEMBRANE ASSOCIATED"/>
    <property type="match status" value="1"/>
</dbReference>
<dbReference type="Pfam" id="PF00068">
    <property type="entry name" value="Phospholip_A2_1"/>
    <property type="match status" value="1"/>
</dbReference>
<dbReference type="PRINTS" id="PR00389">
    <property type="entry name" value="PHPHLIPASEA2"/>
</dbReference>
<dbReference type="SMART" id="SM00085">
    <property type="entry name" value="PA2c"/>
    <property type="match status" value="1"/>
</dbReference>
<dbReference type="SUPFAM" id="SSF48619">
    <property type="entry name" value="Phospholipase A2, PLA2"/>
    <property type="match status" value="1"/>
</dbReference>
<dbReference type="PROSITE" id="PS00119">
    <property type="entry name" value="PA2_ASP"/>
    <property type="match status" value="1"/>
</dbReference>
<dbReference type="PROSITE" id="PS00118">
    <property type="entry name" value="PA2_HIS"/>
    <property type="match status" value="1"/>
</dbReference>
<evidence type="ECO:0000250" key="1"/>
<evidence type="ECO:0000250" key="2">
    <source>
        <dbReference type="UniProtKB" id="P62022"/>
    </source>
</evidence>
<evidence type="ECO:0000255" key="3">
    <source>
        <dbReference type="PROSITE-ProRule" id="PRU10035"/>
    </source>
</evidence>
<evidence type="ECO:0000255" key="4">
    <source>
        <dbReference type="PROSITE-ProRule" id="PRU10036"/>
    </source>
</evidence>
<evidence type="ECO:0000269" key="5">
    <source>
    </source>
</evidence>
<evidence type="ECO:0000269" key="6">
    <source>
    </source>
</evidence>
<evidence type="ECO:0000305" key="7"/>
<organism>
    <name type="scientific">Crotalus scutulatus scutulatus</name>
    <name type="common">Mojave rattlesnake</name>
    <dbReference type="NCBI Taxonomy" id="8738"/>
    <lineage>
        <taxon>Eukaryota</taxon>
        <taxon>Metazoa</taxon>
        <taxon>Chordata</taxon>
        <taxon>Craniata</taxon>
        <taxon>Vertebrata</taxon>
        <taxon>Euteleostomi</taxon>
        <taxon>Lepidosauria</taxon>
        <taxon>Squamata</taxon>
        <taxon>Bifurcata</taxon>
        <taxon>Unidentata</taxon>
        <taxon>Episquamata</taxon>
        <taxon>Toxicofera</taxon>
        <taxon>Serpentes</taxon>
        <taxon>Colubroidea</taxon>
        <taxon>Viperidae</taxon>
        <taxon>Crotalinae</taxon>
        <taxon>Crotalus</taxon>
    </lineage>
</organism>
<sequence length="138" mass="15907">MRALWIVAVLLVGVEGHLLQFNKMIKFETRKNAIPFYAFYGCYCGWGGRGRPKDATDRCCFVHDCCYGKLAKCNTKWDIYPYSLKSGYITCGKGTWCEEQICECDRVAAECLRRSLSTYKYGYMFYPDSRCRGPSETC</sequence>
<comment type="function">
    <text evidence="5">Snake venom phospholipase A2 (PLA2) that inhibits neuromuscular transmission by blocking acetylcholine release from the nerve termini. PLA2 catalyzes the calcium-dependent hydrolysis of the 2-acyl groups in 3-sn-phosphoglycerides.</text>
</comment>
<comment type="catalytic activity">
    <reaction evidence="3 4">
        <text>a 1,2-diacyl-sn-glycero-3-phosphocholine + H2O = a 1-acyl-sn-glycero-3-phosphocholine + a fatty acid + H(+)</text>
        <dbReference type="Rhea" id="RHEA:15801"/>
        <dbReference type="ChEBI" id="CHEBI:15377"/>
        <dbReference type="ChEBI" id="CHEBI:15378"/>
        <dbReference type="ChEBI" id="CHEBI:28868"/>
        <dbReference type="ChEBI" id="CHEBI:57643"/>
        <dbReference type="ChEBI" id="CHEBI:58168"/>
        <dbReference type="EC" id="3.1.1.4"/>
    </reaction>
</comment>
<comment type="cofactor">
    <cofactor evidence="1">
        <name>Ca(2+)</name>
        <dbReference type="ChEBI" id="CHEBI:29108"/>
    </cofactor>
    <text evidence="1">Binds 1 Ca(2+) ion.</text>
</comment>
<comment type="subunit">
    <text evidence="5">Heterodimer of an acidic subunit and a basic chain. The acidic subunit is non-toxic, without enzymatic activity and comprises 3 peptides that are cross-linked by 7 disulfide bridges. The basic subunit is toxic, has phospholipase A2 activity and is composed of a single chain.</text>
</comment>
<comment type="subcellular location">
    <subcellularLocation>
        <location>Secreted</location>
    </subcellularLocation>
</comment>
<comment type="tissue specificity">
    <text>Expressed by the venom gland.</text>
</comment>
<comment type="mass spectrometry" mass="14183.0" method="Electrospray" evidence="5"/>
<comment type="similarity">
    <text evidence="7">Belongs to the phospholipase A2 family. Group II subfamily. D49 sub-subfamily.</text>
</comment>
<accession>P62023</accession>
<accession>P07517</accession>
<accession>P23559</accession>
<feature type="signal peptide" evidence="5 6">
    <location>
        <begin position="1"/>
        <end position="16"/>
    </location>
</feature>
<feature type="chain" id="PRO_0000022860" description="Basic phospholipase A2 Mtx-b">
    <location>
        <begin position="17"/>
        <end position="138"/>
    </location>
</feature>
<feature type="active site" evidence="2">
    <location>
        <position position="63"/>
    </location>
</feature>
<feature type="active site" evidence="2">
    <location>
        <position position="105"/>
    </location>
</feature>
<feature type="binding site" evidence="2">
    <location>
        <position position="43"/>
    </location>
    <ligand>
        <name>Ca(2+)</name>
        <dbReference type="ChEBI" id="CHEBI:29108"/>
    </ligand>
</feature>
<feature type="binding site" evidence="2">
    <location>
        <position position="45"/>
    </location>
    <ligand>
        <name>Ca(2+)</name>
        <dbReference type="ChEBI" id="CHEBI:29108"/>
    </ligand>
</feature>
<feature type="binding site" evidence="2">
    <location>
        <position position="47"/>
    </location>
    <ligand>
        <name>Ca(2+)</name>
        <dbReference type="ChEBI" id="CHEBI:29108"/>
    </ligand>
</feature>
<feature type="binding site" evidence="2">
    <location>
        <position position="64"/>
    </location>
    <ligand>
        <name>Ca(2+)</name>
        <dbReference type="ChEBI" id="CHEBI:29108"/>
    </ligand>
</feature>
<feature type="disulfide bond" evidence="2">
    <location>
        <begin position="42"/>
        <end position="131"/>
    </location>
</feature>
<feature type="disulfide bond" evidence="2">
    <location>
        <begin position="44"/>
        <end position="60"/>
    </location>
</feature>
<feature type="disulfide bond" evidence="2">
    <location>
        <begin position="59"/>
        <end position="111"/>
    </location>
</feature>
<feature type="disulfide bond" evidence="2">
    <location>
        <begin position="65"/>
        <end position="138"/>
    </location>
</feature>
<feature type="disulfide bond" evidence="2">
    <location>
        <begin position="66"/>
        <end position="104"/>
    </location>
</feature>
<feature type="disulfide bond" evidence="2">
    <location>
        <begin position="73"/>
        <end position="97"/>
    </location>
</feature>
<feature type="disulfide bond" evidence="2">
    <location>
        <begin position="91"/>
        <end position="102"/>
    </location>
</feature>